<dbReference type="EMBL" id="AK048084">
    <property type="protein sequence ID" value="BAC33236.1"/>
    <property type="molecule type" value="mRNA"/>
</dbReference>
<dbReference type="EMBL" id="CAAA01066806">
    <property type="status" value="NOT_ANNOTATED_CDS"/>
    <property type="molecule type" value="Genomic_DNA"/>
</dbReference>
<dbReference type="EMBL" id="CAAA01066807">
    <property type="status" value="NOT_ANNOTATED_CDS"/>
    <property type="molecule type" value="Genomic_DNA"/>
</dbReference>
<dbReference type="EMBL" id="CH466594">
    <property type="protein sequence ID" value="EDL15087.1"/>
    <property type="molecule type" value="Genomic_DNA"/>
</dbReference>
<dbReference type="EMBL" id="CH466594">
    <property type="protein sequence ID" value="EDL15088.1"/>
    <property type="molecule type" value="Genomic_DNA"/>
</dbReference>
<dbReference type="EMBL" id="BC031374">
    <property type="status" value="NOT_ANNOTATED_CDS"/>
    <property type="molecule type" value="mRNA"/>
</dbReference>
<dbReference type="EMBL" id="BC025458">
    <property type="protein sequence ID" value="AAH25458.1"/>
    <property type="molecule type" value="mRNA"/>
</dbReference>
<dbReference type="CCDS" id="CCDS89875.1">
    <molecule id="Q8C886-1"/>
</dbReference>
<dbReference type="RefSeq" id="NP_001355568.1">
    <molecule id="Q8C886-1"/>
    <property type="nucleotide sequence ID" value="NM_001368639.1"/>
</dbReference>
<dbReference type="SMR" id="Q8C886"/>
<dbReference type="FunCoup" id="Q8C886">
    <property type="interactions" value="200"/>
</dbReference>
<dbReference type="IntAct" id="Q8C886">
    <property type="interactions" value="2"/>
</dbReference>
<dbReference type="GlyGen" id="Q8C886">
    <property type="glycosylation" value="1 site"/>
</dbReference>
<dbReference type="iPTMnet" id="Q8C886"/>
<dbReference type="PhosphoSitePlus" id="Q8C886"/>
<dbReference type="PaxDb" id="10090-ENSMUSP00000101196"/>
<dbReference type="ProteomicsDB" id="289915">
    <molecule id="Q8C886-1"/>
</dbReference>
<dbReference type="ProteomicsDB" id="289916">
    <molecule id="Q8C886-2"/>
</dbReference>
<dbReference type="ProteomicsDB" id="332938"/>
<dbReference type="ProteomicsDB" id="339243"/>
<dbReference type="Antibodypedia" id="26039">
    <property type="antibodies" value="16 antibodies from 10 providers"/>
</dbReference>
<dbReference type="Ensembl" id="ENSMUST00000217885.2">
    <molecule id="Q8C886-1"/>
    <property type="protein sequence ID" value="ENSMUSP00000151799.2"/>
    <property type="gene ID" value="ENSMUSG00000078485.5"/>
</dbReference>
<dbReference type="Ensembl" id="ENSMUST00000218699.2">
    <molecule id="Q8C886-3"/>
    <property type="protein sequence ID" value="ENSMUSP00000151311.2"/>
    <property type="gene ID" value="ENSMUSG00000078485.5"/>
</dbReference>
<dbReference type="GeneID" id="231002"/>
<dbReference type="AGR" id="MGI:2387630"/>
<dbReference type="MGI" id="MGI:2387630">
    <property type="gene designation" value="Plekhn1"/>
</dbReference>
<dbReference type="VEuPathDB" id="HostDB:ENSMUSG00000078485"/>
<dbReference type="eggNOG" id="ENOG502QSRE">
    <property type="taxonomic scope" value="Eukaryota"/>
</dbReference>
<dbReference type="GeneTree" id="ENSGT00390000003618"/>
<dbReference type="InParanoid" id="Q8C886"/>
<dbReference type="PhylomeDB" id="Q8C886"/>
<dbReference type="ChiTaRS" id="Plekhn1">
    <property type="organism name" value="mouse"/>
</dbReference>
<dbReference type="PRO" id="PR:Q8C886"/>
<dbReference type="Proteomes" id="UP000000589">
    <property type="component" value="Chromosome 4"/>
</dbReference>
<dbReference type="RNAct" id="Q8C886">
    <property type="molecule type" value="protein"/>
</dbReference>
<dbReference type="Bgee" id="ENSMUSG00000078485">
    <property type="expression patterns" value="Expressed in lip and 128 other cell types or tissues"/>
</dbReference>
<dbReference type="ExpressionAtlas" id="Q8C886">
    <property type="expression patterns" value="baseline and differential"/>
</dbReference>
<dbReference type="GO" id="GO:0005856">
    <property type="term" value="C:cytoskeleton"/>
    <property type="evidence" value="ECO:0000250"/>
    <property type="project" value="UniProtKB"/>
</dbReference>
<dbReference type="GO" id="GO:0031966">
    <property type="term" value="C:mitochondrial membrane"/>
    <property type="evidence" value="ECO:0000250"/>
    <property type="project" value="UniProtKB"/>
</dbReference>
<dbReference type="GO" id="GO:0005739">
    <property type="term" value="C:mitochondrion"/>
    <property type="evidence" value="ECO:0000314"/>
    <property type="project" value="UniProtKB"/>
</dbReference>
<dbReference type="GO" id="GO:0005886">
    <property type="term" value="C:plasma membrane"/>
    <property type="evidence" value="ECO:0007669"/>
    <property type="project" value="UniProtKB-SubCell"/>
</dbReference>
<dbReference type="GO" id="GO:1901612">
    <property type="term" value="F:cardiolipin binding"/>
    <property type="evidence" value="ECO:0000250"/>
    <property type="project" value="UniProtKB"/>
</dbReference>
<dbReference type="GO" id="GO:0070300">
    <property type="term" value="F:phosphatidic acid binding"/>
    <property type="evidence" value="ECO:0000250"/>
    <property type="project" value="UniProtKB"/>
</dbReference>
<dbReference type="GO" id="GO:1901981">
    <property type="term" value="F:phosphatidylinositol phosphate binding"/>
    <property type="evidence" value="ECO:0000250"/>
    <property type="project" value="UniProtKB"/>
</dbReference>
<dbReference type="GO" id="GO:0001786">
    <property type="term" value="F:phosphatidylserine binding"/>
    <property type="evidence" value="ECO:0000250"/>
    <property type="project" value="UniProtKB"/>
</dbReference>
<dbReference type="GO" id="GO:0061158">
    <property type="term" value="P:3'-UTR-mediated mRNA destabilization"/>
    <property type="evidence" value="ECO:0000314"/>
    <property type="project" value="UniProtKB"/>
</dbReference>
<dbReference type="GO" id="GO:0043065">
    <property type="term" value="P:positive regulation of apoptotic process"/>
    <property type="evidence" value="ECO:0000250"/>
    <property type="project" value="UniProtKB"/>
</dbReference>
<dbReference type="GO" id="GO:0001666">
    <property type="term" value="P:response to hypoxia"/>
    <property type="evidence" value="ECO:0000250"/>
    <property type="project" value="UniProtKB"/>
</dbReference>
<dbReference type="FunFam" id="2.30.29.30:FF:000494">
    <property type="entry name" value="Probable pleckstrin homology domain-containing family N member 1"/>
    <property type="match status" value="1"/>
</dbReference>
<dbReference type="Gene3D" id="2.30.29.30">
    <property type="entry name" value="Pleckstrin-homology domain (PH domain)/Phosphotyrosine-binding domain (PTB)"/>
    <property type="match status" value="2"/>
</dbReference>
<dbReference type="InterPro" id="IPR011993">
    <property type="entry name" value="PH-like_dom_sf"/>
</dbReference>
<dbReference type="InterPro" id="IPR001849">
    <property type="entry name" value="PH_domain"/>
</dbReference>
<dbReference type="InterPro" id="IPR042835">
    <property type="entry name" value="PLEKHN1"/>
</dbReference>
<dbReference type="PANTHER" id="PTHR46882">
    <property type="entry name" value="PLECKSTRIN HOMOLOGY DOMAIN-CONTAINING FAMILY N MEMBER 1"/>
    <property type="match status" value="1"/>
</dbReference>
<dbReference type="PANTHER" id="PTHR46882:SF1">
    <property type="entry name" value="PLECKSTRIN HOMOLOGY DOMAIN-CONTAINING FAMILY N MEMBER 1"/>
    <property type="match status" value="1"/>
</dbReference>
<dbReference type="SMART" id="SM00233">
    <property type="entry name" value="PH"/>
    <property type="match status" value="2"/>
</dbReference>
<dbReference type="SUPFAM" id="SSF50729">
    <property type="entry name" value="PH domain-like"/>
    <property type="match status" value="2"/>
</dbReference>
<name>PKHN1_MOUSE</name>
<feature type="initiator methionine" description="Removed" evidence="1">
    <location>
        <position position="1"/>
    </location>
</feature>
<feature type="chain" id="PRO_0000309364" description="Probable pleckstrin homology domain-containing family N member 1">
    <location>
        <begin position="2"/>
        <end position="610"/>
    </location>
</feature>
<feature type="domain" description="PH 1">
    <location>
        <begin position="96"/>
        <end position="192"/>
    </location>
</feature>
<feature type="domain" description="PH 2">
    <location>
        <begin position="227"/>
        <end position="324"/>
    </location>
</feature>
<feature type="region of interest" description="Disordered" evidence="2">
    <location>
        <begin position="1"/>
        <end position="30"/>
    </location>
</feature>
<feature type="region of interest" description="Interaction with C1QBP" evidence="1">
    <location>
        <begin position="61"/>
        <end position="100"/>
    </location>
</feature>
<feature type="region of interest" description="Disordered" evidence="2">
    <location>
        <begin position="327"/>
        <end position="357"/>
    </location>
</feature>
<feature type="region of interest" description="Disordered" evidence="2">
    <location>
        <begin position="371"/>
        <end position="431"/>
    </location>
</feature>
<feature type="region of interest" description="Disordered" evidence="2">
    <location>
        <begin position="443"/>
        <end position="473"/>
    </location>
</feature>
<feature type="region of interest" description="Disordered" evidence="2">
    <location>
        <begin position="493"/>
        <end position="610"/>
    </location>
</feature>
<feature type="compositionally biased region" description="Polar residues" evidence="2">
    <location>
        <begin position="371"/>
        <end position="380"/>
    </location>
</feature>
<feature type="compositionally biased region" description="Polar residues" evidence="2">
    <location>
        <begin position="391"/>
        <end position="402"/>
    </location>
</feature>
<feature type="compositionally biased region" description="Low complexity" evidence="2">
    <location>
        <begin position="504"/>
        <end position="526"/>
    </location>
</feature>
<feature type="modified residue" description="Phosphotyrosine" evidence="1">
    <location>
        <position position="307"/>
    </location>
</feature>
<feature type="modified residue" description="Phosphotyrosine" evidence="1">
    <location>
        <position position="462"/>
    </location>
</feature>
<feature type="lipid moiety-binding region" description="N-myristoyl glycine" evidence="1">
    <location>
        <position position="2"/>
    </location>
</feature>
<feature type="splice variant" id="VSP_059841" description="In isoform 2." evidence="5">
    <location>
        <begin position="1"/>
        <end position="188"/>
    </location>
</feature>
<feature type="splice variant" id="VSP_059842" description="In isoform 2." evidence="5">
    <original>FLCAIQTSPGPDLSSPFPPVSVSVPVSESSSGISSSPGPLGSHLLTKKGALQPRASQRHRGSF</original>
    <variation>LWHLQLAWASGLPLTHQERCPATQSFPETPGFLQEQRPTALRLPSACHPCQRRQTQFPAPSPR</variation>
    <location>
        <begin position="485"/>
        <end position="547"/>
    </location>
</feature>
<feature type="splice variant" id="VSP_059843" description="In isoform 2." evidence="5">
    <location>
        <begin position="548"/>
        <end position="610"/>
    </location>
</feature>
<feature type="splice variant" id="VSP_059844" description="In isoform 3." evidence="4">
    <original>VTPAREGKPSS</original>
    <variation>GRGCYFSKAGA</variation>
    <location>
        <begin position="561"/>
        <end position="571"/>
    </location>
</feature>
<feature type="splice variant" id="VSP_059845" description="In isoform 3." evidence="4">
    <location>
        <begin position="572"/>
        <end position="610"/>
    </location>
</feature>
<feature type="sequence conflict" description="In Ref. 4; AAH25458." evidence="7" ref="4">
    <original>WKL</original>
    <variation>TRP</variation>
    <location>
        <begin position="360"/>
        <end position="362"/>
    </location>
</feature>
<gene>
    <name type="primary">Plekhn1</name>
    <name evidence="6" type="synonym">Clpabp</name>
</gene>
<accession>Q8C886</accession>
<accession>A0A1W2P6Q7</accession>
<accession>A0A1W2P7X5</accession>
<accession>Q8R3H1</accession>
<protein>
    <recommendedName>
        <fullName>Probable pleckstrin homology domain-containing family N member 1</fullName>
        <shortName>PH domain-containing family N member 1</shortName>
    </recommendedName>
    <alternativeName>
        <fullName evidence="6">Cardiolipin and phosphatidic acid-binding protein</fullName>
    </alternativeName>
</protein>
<proteinExistence type="evidence at protein level"/>
<comment type="function">
    <text evidence="1 3">Controls the stability of the leptin mRNA harboring an AU-rich element (ARE) in its 3' UTR, in cooperation with the RNA stabilizer ELAVL1. Decreases the stability of the leptin mRNA by antagonizing the function of ELAVL1 by inducing its atypical recruitment from the nucleus to the cytosol (PubMed:27616329). Binds to cardiolipin (CL), phosphatidic acid (PA), phosphatidylinositol 4-phosphate (PtdIns(4)P) and phosphatidylserine (PS) (By similarity).</text>
</comment>
<comment type="subunit">
    <text evidence="1">Found in a complex with cytochrome c mRNA and various ribosomal proteins. Interacts with C1QBP, ELAVL1 and BID.</text>
</comment>
<comment type="interaction">
    <interactant intactId="EBI-646708">
        <id>Q8C886</id>
    </interactant>
    <interactant intactId="EBI-520123">
        <id>P39428</id>
        <label>Traf1</label>
    </interactant>
    <organismsDiffer>false</organismsDiffer>
    <experiments>6</experiments>
</comment>
<comment type="subcellular location">
    <subcellularLocation>
        <location evidence="1">Cell membrane</location>
        <topology evidence="1">Lipid-anchor</topology>
    </subcellularLocation>
    <subcellularLocation>
        <location evidence="1">Mitochondrion membrane</location>
    </subcellularLocation>
    <subcellularLocation>
        <location evidence="3">Mitochondrion</location>
    </subcellularLocation>
    <text evidence="1">Interaction with C1QBP and phosphorylation is essential for its mitochondrial localization. Localizes on the microtubule in the form of small granules.</text>
</comment>
<comment type="alternative products">
    <event type="alternative splicing"/>
    <isoform>
        <id>Q8C886-1</id>
        <name>1</name>
        <sequence type="displayed"/>
    </isoform>
    <isoform>
        <id>Q8C886-2</id>
        <name>2</name>
        <sequence type="described" ref="VSP_059841 VSP_059842 VSP_059843"/>
    </isoform>
    <isoform>
        <id>Q8C886-3</id>
        <name>3</name>
        <sequence type="described" ref="VSP_059844 VSP_059845"/>
    </isoform>
</comment>
<comment type="tissue specificity">
    <text evidence="3">Testis and adipose tissue (at protein level). Ubiquitous.</text>
</comment>
<comment type="domain">
    <text evidence="1">Both PH domains are essential for its mitochondrial localization.</text>
</comment>
<comment type="PTM">
    <text evidence="1">Phosphorylation is essential for its mitochondrial localization and regulates its interaction with C1QBP.</text>
</comment>
<comment type="disruption phenotype">
    <text evidence="3">Male knockout mice (KO) gradually become fat after 20 weeks of age compared to the wild-type (WT) mice. At 36 weeks, weight differences in whole body, epididymal fat pad, and liver between the KO and WT mice is significant. KO mice exhibit a hyperphagia phenotype with the plasma concentration of leptin higher in the KO mice than in the WT mice.</text>
</comment>
<organism>
    <name type="scientific">Mus musculus</name>
    <name type="common">Mouse</name>
    <dbReference type="NCBI Taxonomy" id="10090"/>
    <lineage>
        <taxon>Eukaryota</taxon>
        <taxon>Metazoa</taxon>
        <taxon>Chordata</taxon>
        <taxon>Craniata</taxon>
        <taxon>Vertebrata</taxon>
        <taxon>Euteleostomi</taxon>
        <taxon>Mammalia</taxon>
        <taxon>Eutheria</taxon>
        <taxon>Euarchontoglires</taxon>
        <taxon>Glires</taxon>
        <taxon>Rodentia</taxon>
        <taxon>Myomorpha</taxon>
        <taxon>Muroidea</taxon>
        <taxon>Muridae</taxon>
        <taxon>Murinae</taxon>
        <taxon>Mus</taxon>
        <taxon>Mus</taxon>
    </lineage>
</organism>
<keyword id="KW-0025">Alternative splicing</keyword>
<keyword id="KW-1003">Cell membrane</keyword>
<keyword id="KW-0449">Lipoprotein</keyword>
<keyword id="KW-0472">Membrane</keyword>
<keyword id="KW-0496">Mitochondrion</keyword>
<keyword id="KW-0519">Myristate</keyword>
<keyword id="KW-0597">Phosphoprotein</keyword>
<keyword id="KW-1185">Reference proteome</keyword>
<sequence>MGNSHCVPQAPRRLRASFSRKPSLKGNREDSARKLAGLFGTEARPDGDTAANRIFHYIPGTDIPGPEHHPENLEQPFLSVFKKGWRRTPVRNLGKVVHYSKVRLRFQHSQDISDCYLELFPSHLYFQAHGSEGLTFQGLLPLTELNICPTDGSREHAFQITGPLPAPLLVLCHSEAELSHWLYHLEKQMALLGLQRCHSAPPQGSLGDKPPWTQLRRAYGCGSMSGAICASRVKLQHLPSQEQWDRLLVLYPASLAIFSEEPEGLSFKGELPLSAIHINLEEKEKEIRSFLIEGHLINTIRVVCASYEDYSQWLLCLRTVSRRDGAHLPPGPESFPGLQKPTQLVGRGRGSLSSNGRSSWKLECPVFPTSQSLPESSVPTTIGFPAPPVPNQTDSNCVSTGQKKMKPSDSSPSPRGRAQREVSGSTVPLPLPLDLTKMSALNLDSGPEAQDHSLDIPHSPLYADPYTPPATSRHKITDIQGLDEFLCAIQTSPGPDLSSPFPPVSVSVPVSESSSGISSSPGPLGSHLLTKKGALQPRASQRHRGSFKSRGPQPSDFPQLVTPAREGKPSSLPPPPDEEAPIWNKTSSPSHPKWPQPRKPAVEGGFIQWI</sequence>
<reference key="1">
    <citation type="journal article" date="2005" name="Science">
        <title>The transcriptional landscape of the mammalian genome.</title>
        <authorList>
            <person name="Carninci P."/>
            <person name="Kasukawa T."/>
            <person name="Katayama S."/>
            <person name="Gough J."/>
            <person name="Frith M.C."/>
            <person name="Maeda N."/>
            <person name="Oyama R."/>
            <person name="Ravasi T."/>
            <person name="Lenhard B."/>
            <person name="Wells C."/>
            <person name="Kodzius R."/>
            <person name="Shimokawa K."/>
            <person name="Bajic V.B."/>
            <person name="Brenner S.E."/>
            <person name="Batalov S."/>
            <person name="Forrest A.R."/>
            <person name="Zavolan M."/>
            <person name="Davis M.J."/>
            <person name="Wilming L.G."/>
            <person name="Aidinis V."/>
            <person name="Allen J.E."/>
            <person name="Ambesi-Impiombato A."/>
            <person name="Apweiler R."/>
            <person name="Aturaliya R.N."/>
            <person name="Bailey T.L."/>
            <person name="Bansal M."/>
            <person name="Baxter L."/>
            <person name="Beisel K.W."/>
            <person name="Bersano T."/>
            <person name="Bono H."/>
            <person name="Chalk A.M."/>
            <person name="Chiu K.P."/>
            <person name="Choudhary V."/>
            <person name="Christoffels A."/>
            <person name="Clutterbuck D.R."/>
            <person name="Crowe M.L."/>
            <person name="Dalla E."/>
            <person name="Dalrymple B.P."/>
            <person name="de Bono B."/>
            <person name="Della Gatta G."/>
            <person name="di Bernardo D."/>
            <person name="Down T."/>
            <person name="Engstrom P."/>
            <person name="Fagiolini M."/>
            <person name="Faulkner G."/>
            <person name="Fletcher C.F."/>
            <person name="Fukushima T."/>
            <person name="Furuno M."/>
            <person name="Futaki S."/>
            <person name="Gariboldi M."/>
            <person name="Georgii-Hemming P."/>
            <person name="Gingeras T.R."/>
            <person name="Gojobori T."/>
            <person name="Green R.E."/>
            <person name="Gustincich S."/>
            <person name="Harbers M."/>
            <person name="Hayashi Y."/>
            <person name="Hensch T.K."/>
            <person name="Hirokawa N."/>
            <person name="Hill D."/>
            <person name="Huminiecki L."/>
            <person name="Iacono M."/>
            <person name="Ikeo K."/>
            <person name="Iwama A."/>
            <person name="Ishikawa T."/>
            <person name="Jakt M."/>
            <person name="Kanapin A."/>
            <person name="Katoh M."/>
            <person name="Kawasawa Y."/>
            <person name="Kelso J."/>
            <person name="Kitamura H."/>
            <person name="Kitano H."/>
            <person name="Kollias G."/>
            <person name="Krishnan S.P."/>
            <person name="Kruger A."/>
            <person name="Kummerfeld S.K."/>
            <person name="Kurochkin I.V."/>
            <person name="Lareau L.F."/>
            <person name="Lazarevic D."/>
            <person name="Lipovich L."/>
            <person name="Liu J."/>
            <person name="Liuni S."/>
            <person name="McWilliam S."/>
            <person name="Madan Babu M."/>
            <person name="Madera M."/>
            <person name="Marchionni L."/>
            <person name="Matsuda H."/>
            <person name="Matsuzawa S."/>
            <person name="Miki H."/>
            <person name="Mignone F."/>
            <person name="Miyake S."/>
            <person name="Morris K."/>
            <person name="Mottagui-Tabar S."/>
            <person name="Mulder N."/>
            <person name="Nakano N."/>
            <person name="Nakauchi H."/>
            <person name="Ng P."/>
            <person name="Nilsson R."/>
            <person name="Nishiguchi S."/>
            <person name="Nishikawa S."/>
            <person name="Nori F."/>
            <person name="Ohara O."/>
            <person name="Okazaki Y."/>
            <person name="Orlando V."/>
            <person name="Pang K.C."/>
            <person name="Pavan W.J."/>
            <person name="Pavesi G."/>
            <person name="Pesole G."/>
            <person name="Petrovsky N."/>
            <person name="Piazza S."/>
            <person name="Reed J."/>
            <person name="Reid J.F."/>
            <person name="Ring B.Z."/>
            <person name="Ringwald M."/>
            <person name="Rost B."/>
            <person name="Ruan Y."/>
            <person name="Salzberg S.L."/>
            <person name="Sandelin A."/>
            <person name="Schneider C."/>
            <person name="Schoenbach C."/>
            <person name="Sekiguchi K."/>
            <person name="Semple C.A."/>
            <person name="Seno S."/>
            <person name="Sessa L."/>
            <person name="Sheng Y."/>
            <person name="Shibata Y."/>
            <person name="Shimada H."/>
            <person name="Shimada K."/>
            <person name="Silva D."/>
            <person name="Sinclair B."/>
            <person name="Sperling S."/>
            <person name="Stupka E."/>
            <person name="Sugiura K."/>
            <person name="Sultana R."/>
            <person name="Takenaka Y."/>
            <person name="Taki K."/>
            <person name="Tammoja K."/>
            <person name="Tan S.L."/>
            <person name="Tang S."/>
            <person name="Taylor M.S."/>
            <person name="Tegner J."/>
            <person name="Teichmann S.A."/>
            <person name="Ueda H.R."/>
            <person name="van Nimwegen E."/>
            <person name="Verardo R."/>
            <person name="Wei C.L."/>
            <person name="Yagi K."/>
            <person name="Yamanishi H."/>
            <person name="Zabarovsky E."/>
            <person name="Zhu S."/>
            <person name="Zimmer A."/>
            <person name="Hide W."/>
            <person name="Bult C."/>
            <person name="Grimmond S.M."/>
            <person name="Teasdale R.D."/>
            <person name="Liu E.T."/>
            <person name="Brusic V."/>
            <person name="Quackenbush J."/>
            <person name="Wahlestedt C."/>
            <person name="Mattick J.S."/>
            <person name="Hume D.A."/>
            <person name="Kai C."/>
            <person name="Sasaki D."/>
            <person name="Tomaru Y."/>
            <person name="Fukuda S."/>
            <person name="Kanamori-Katayama M."/>
            <person name="Suzuki M."/>
            <person name="Aoki J."/>
            <person name="Arakawa T."/>
            <person name="Iida J."/>
            <person name="Imamura K."/>
            <person name="Itoh M."/>
            <person name="Kato T."/>
            <person name="Kawaji H."/>
            <person name="Kawagashira N."/>
            <person name="Kawashima T."/>
            <person name="Kojima M."/>
            <person name="Kondo S."/>
            <person name="Konno H."/>
            <person name="Nakano K."/>
            <person name="Ninomiya N."/>
            <person name="Nishio T."/>
            <person name="Okada M."/>
            <person name="Plessy C."/>
            <person name="Shibata K."/>
            <person name="Shiraki T."/>
            <person name="Suzuki S."/>
            <person name="Tagami M."/>
            <person name="Waki K."/>
            <person name="Watahiki A."/>
            <person name="Okamura-Oho Y."/>
            <person name="Suzuki H."/>
            <person name="Kawai J."/>
            <person name="Hayashizaki Y."/>
        </authorList>
    </citation>
    <scope>NUCLEOTIDE SEQUENCE [LARGE SCALE MRNA] (ISOFORM 2)</scope>
    <source>
        <strain>C57BL/6J</strain>
        <tissue>Head</tissue>
    </source>
</reference>
<reference key="2">
    <citation type="journal article" date="2009" name="PLoS Biol.">
        <title>Lineage-specific biology revealed by a finished genome assembly of the mouse.</title>
        <authorList>
            <person name="Church D.M."/>
            <person name="Goodstadt L."/>
            <person name="Hillier L.W."/>
            <person name="Zody M.C."/>
            <person name="Goldstein S."/>
            <person name="She X."/>
            <person name="Bult C.J."/>
            <person name="Agarwala R."/>
            <person name="Cherry J.L."/>
            <person name="DiCuccio M."/>
            <person name="Hlavina W."/>
            <person name="Kapustin Y."/>
            <person name="Meric P."/>
            <person name="Maglott D."/>
            <person name="Birtle Z."/>
            <person name="Marques A.C."/>
            <person name="Graves T."/>
            <person name="Zhou S."/>
            <person name="Teague B."/>
            <person name="Potamousis K."/>
            <person name="Churas C."/>
            <person name="Place M."/>
            <person name="Herschleb J."/>
            <person name="Runnheim R."/>
            <person name="Forrest D."/>
            <person name="Amos-Landgraf J."/>
            <person name="Schwartz D.C."/>
            <person name="Cheng Z."/>
            <person name="Lindblad-Toh K."/>
            <person name="Eichler E.E."/>
            <person name="Ponting C.P."/>
        </authorList>
    </citation>
    <scope>NUCLEOTIDE SEQUENCE [LARGE SCALE GENOMIC DNA]</scope>
    <source>
        <strain>C57BL/6J</strain>
    </source>
</reference>
<reference key="3">
    <citation type="submission" date="2005-07" db="EMBL/GenBank/DDBJ databases">
        <authorList>
            <person name="Mural R.J."/>
            <person name="Adams M.D."/>
            <person name="Myers E.W."/>
            <person name="Smith H.O."/>
            <person name="Venter J.C."/>
        </authorList>
    </citation>
    <scope>NUCLEOTIDE SEQUENCE [LARGE SCALE GENOMIC DNA]</scope>
</reference>
<reference key="4">
    <citation type="journal article" date="2004" name="Genome Res.">
        <title>The status, quality, and expansion of the NIH full-length cDNA project: the Mammalian Gene Collection (MGC).</title>
        <authorList>
            <consortium name="The MGC Project Team"/>
        </authorList>
    </citation>
    <scope>NUCLEOTIDE SEQUENCE [LARGE SCALE MRNA] (ISOFORM 3)</scope>
    <scope>NUCLEOTIDE SEQUENCE [LARGE SCALE MRNA] OF 360-598 (ISOFORM 1)</scope>
    <source>
        <strain>C57BL/6J</strain>
        <strain>FVB/N</strain>
        <tissue>Mammary tumor</tissue>
        <tissue>Retina</tissue>
    </source>
</reference>
<reference key="5">
    <citation type="journal article" date="2016" name="Biochim. Biophys. Acta">
        <title>Antagonizing effect of CLPABP on the function of HuR as a regulator of ARE-containing leptin mRNA stability and the effect of its depletion on obesity in old male mouse.</title>
        <authorList>
            <person name="Nishino T."/>
            <person name="Matsunaga R."/>
            <person name="Jikihara H."/>
            <person name="Uchida M."/>
            <person name="Maeda A."/>
            <person name="Qi G."/>
            <person name="Abe T."/>
            <person name="Kiyonari H."/>
            <person name="Tashiro S."/>
            <person name="Inagaki-Ohara K."/>
            <person name="Shimamoto F."/>
            <person name="Konishi H."/>
        </authorList>
    </citation>
    <scope>FUNCTION</scope>
    <scope>DISRUPTION PHENOTYPE</scope>
    <scope>TISSUE SPECIFICITY</scope>
    <scope>SUBCELLULAR LOCATION</scope>
</reference>
<evidence type="ECO:0000250" key="1">
    <source>
        <dbReference type="UniProtKB" id="Q494U1"/>
    </source>
</evidence>
<evidence type="ECO:0000256" key="2">
    <source>
        <dbReference type="SAM" id="MobiDB-lite"/>
    </source>
</evidence>
<evidence type="ECO:0000269" key="3">
    <source>
    </source>
</evidence>
<evidence type="ECO:0000303" key="4">
    <source>
    </source>
</evidence>
<evidence type="ECO:0000303" key="5">
    <source>
    </source>
</evidence>
<evidence type="ECO:0000303" key="6">
    <source>
    </source>
</evidence>
<evidence type="ECO:0000305" key="7"/>